<dbReference type="EMBL" id="AL138641">
    <property type="protein sequence ID" value="CAB86914.1"/>
    <property type="status" value="ALT_SEQ"/>
    <property type="molecule type" value="Genomic_DNA"/>
</dbReference>
<dbReference type="EMBL" id="AL138641">
    <property type="protein sequence ID" value="CAB86915.1"/>
    <property type="status" value="ALT_SEQ"/>
    <property type="molecule type" value="Genomic_DNA"/>
</dbReference>
<dbReference type="EMBL" id="CP002686">
    <property type="protein sequence ID" value="AEE77897.1"/>
    <property type="molecule type" value="Genomic_DNA"/>
</dbReference>
<dbReference type="EMBL" id="AK227236">
    <property type="protein sequence ID" value="BAE99273.1"/>
    <property type="molecule type" value="mRNA"/>
</dbReference>
<dbReference type="EMBL" id="BT009724">
    <property type="protein sequence ID" value="AAP88358.1"/>
    <property type="molecule type" value="mRNA"/>
</dbReference>
<dbReference type="PIR" id="T47426">
    <property type="entry name" value="T47426"/>
</dbReference>
<dbReference type="PIR" id="T47427">
    <property type="entry name" value="T47427"/>
</dbReference>
<dbReference type="RefSeq" id="NP_190023.2">
    <property type="nucleotide sequence ID" value="NM_114305.4"/>
</dbReference>
<dbReference type="SMR" id="Q0WUC5"/>
<dbReference type="FunCoup" id="Q0WUC5">
    <property type="interactions" value="87"/>
</dbReference>
<dbReference type="STRING" id="3702.Q0WUC5"/>
<dbReference type="PaxDb" id="3702-AT3G44370.1"/>
<dbReference type="ProteomicsDB" id="245013"/>
<dbReference type="EnsemblPlants" id="AT3G44370.1">
    <property type="protein sequence ID" value="AT3G44370.1"/>
    <property type="gene ID" value="AT3G44370"/>
</dbReference>
<dbReference type="Gramene" id="AT3G44370.1">
    <property type="protein sequence ID" value="AT3G44370.1"/>
    <property type="gene ID" value="AT3G44370"/>
</dbReference>
<dbReference type="KEGG" id="ath:AT3G44370"/>
<dbReference type="Araport" id="AT3G44370"/>
<dbReference type="TAIR" id="AT3G44370">
    <property type="gene designation" value="OXA2B"/>
</dbReference>
<dbReference type="eggNOG" id="KOG1239">
    <property type="taxonomic scope" value="Eukaryota"/>
</dbReference>
<dbReference type="HOGENOM" id="CLU_032608_1_0_1"/>
<dbReference type="InParanoid" id="Q0WUC5"/>
<dbReference type="PhylomeDB" id="Q0WUC5"/>
<dbReference type="PRO" id="PR:Q0WUC5"/>
<dbReference type="Proteomes" id="UP000006548">
    <property type="component" value="Chromosome 3"/>
</dbReference>
<dbReference type="ExpressionAtlas" id="Q0WUC5">
    <property type="expression patterns" value="baseline and differential"/>
</dbReference>
<dbReference type="GO" id="GO:0005743">
    <property type="term" value="C:mitochondrial inner membrane"/>
    <property type="evidence" value="ECO:0000318"/>
    <property type="project" value="GO_Central"/>
</dbReference>
<dbReference type="GO" id="GO:0005739">
    <property type="term" value="C:mitochondrion"/>
    <property type="evidence" value="ECO:0007005"/>
    <property type="project" value="TAIR"/>
</dbReference>
<dbReference type="GO" id="GO:0032977">
    <property type="term" value="F:membrane insertase activity"/>
    <property type="evidence" value="ECO:0000318"/>
    <property type="project" value="GO_Central"/>
</dbReference>
<dbReference type="GO" id="GO:0033617">
    <property type="term" value="P:mitochondrial cytochrome c oxidase assembly"/>
    <property type="evidence" value="ECO:0000315"/>
    <property type="project" value="TAIR"/>
</dbReference>
<dbReference type="GO" id="GO:0051205">
    <property type="term" value="P:protein insertion into membrane"/>
    <property type="evidence" value="ECO:0000315"/>
    <property type="project" value="TAIR"/>
</dbReference>
<dbReference type="GO" id="GO:0032979">
    <property type="term" value="P:protein insertion into mitochondrial inner membrane from matrix"/>
    <property type="evidence" value="ECO:0000318"/>
    <property type="project" value="GO_Central"/>
</dbReference>
<dbReference type="CDD" id="cd20069">
    <property type="entry name" value="5TM_Oxa1-like"/>
    <property type="match status" value="1"/>
</dbReference>
<dbReference type="FunFam" id="1.25.40.10:FF:000816">
    <property type="entry name" value="ALBINO3-like protein 2, chloroplastic"/>
    <property type="match status" value="1"/>
</dbReference>
<dbReference type="Gene3D" id="1.25.40.10">
    <property type="entry name" value="Tetratricopeptide repeat domain"/>
    <property type="match status" value="1"/>
</dbReference>
<dbReference type="InterPro" id="IPR011990">
    <property type="entry name" value="TPR-like_helical_dom_sf"/>
</dbReference>
<dbReference type="InterPro" id="IPR019734">
    <property type="entry name" value="TPR_rpt"/>
</dbReference>
<dbReference type="InterPro" id="IPR001708">
    <property type="entry name" value="YidC/ALB3/OXA1/COX18"/>
</dbReference>
<dbReference type="PANTHER" id="PTHR12428:SF65">
    <property type="entry name" value="CYTOCHROME C OXIDASE ASSEMBLY PROTEIN COX18, MITOCHONDRIAL"/>
    <property type="match status" value="1"/>
</dbReference>
<dbReference type="PANTHER" id="PTHR12428">
    <property type="entry name" value="OXA1"/>
    <property type="match status" value="1"/>
</dbReference>
<dbReference type="Pfam" id="PF13181">
    <property type="entry name" value="TPR_8"/>
    <property type="match status" value="1"/>
</dbReference>
<dbReference type="SUPFAM" id="SSF48452">
    <property type="entry name" value="TPR-like"/>
    <property type="match status" value="1"/>
</dbReference>
<dbReference type="PROSITE" id="PS50293">
    <property type="entry name" value="TPR_REGION"/>
    <property type="match status" value="2"/>
</dbReference>
<evidence type="ECO:0000250" key="1"/>
<evidence type="ECO:0000255" key="2"/>
<evidence type="ECO:0000256" key="3">
    <source>
        <dbReference type="SAM" id="MobiDB-lite"/>
    </source>
</evidence>
<evidence type="ECO:0000269" key="4">
    <source>
    </source>
</evidence>
<evidence type="ECO:0000305" key="5"/>
<evidence type="ECO:0000305" key="6">
    <source>
    </source>
</evidence>
<keyword id="KW-0472">Membrane</keyword>
<keyword id="KW-0496">Mitochondrion</keyword>
<keyword id="KW-0999">Mitochondrion inner membrane</keyword>
<keyword id="KW-1185">Reference proteome</keyword>
<keyword id="KW-0677">Repeat</keyword>
<keyword id="KW-0802">TPR repeat</keyword>
<keyword id="KW-0809">Transit peptide</keyword>
<keyword id="KW-0812">Transmembrane</keyword>
<keyword id="KW-1133">Transmembrane helix</keyword>
<protein>
    <recommendedName>
        <fullName>ALBINO3-like protein 3, mitochondrial</fullName>
    </recommendedName>
</protein>
<proteinExistence type="evidence at protein level"/>
<comment type="function">
    <text evidence="1">Probably required for the insertion of integral membrane proteins into the mitochondrial inner membrane.</text>
</comment>
<comment type="subcellular location">
    <subcellularLocation>
        <location evidence="6">Mitochondrion inner membrane</location>
        <topology evidence="1">Multi-pass membrane protein</topology>
    </subcellularLocation>
</comment>
<comment type="similarity">
    <text evidence="5">Belongs to the OXA1/ALB3/YidC (TC 2.A.9.2) family.</text>
</comment>
<comment type="sequence caution" evidence="5">
    <conflict type="erroneous gene model prediction">
        <sequence resource="EMBL-CDS" id="CAB86914"/>
    </conflict>
    <text>Was originally thought to correspond to two different genes At3g44360 and At3g44370.</text>
</comment>
<comment type="sequence caution" evidence="5">
    <conflict type="erroneous gene model prediction">
        <sequence resource="EMBL-CDS" id="CAB86915"/>
    </conflict>
    <text>Was originally thought to correspond to two different genes At3g44360 and At3g44370.</text>
</comment>
<accession>Q0WUC5</accession>
<accession>Q7XJ56</accession>
<accession>Q9M288</accession>
<accession>Q9M289</accession>
<organism>
    <name type="scientific">Arabidopsis thaliana</name>
    <name type="common">Mouse-ear cress</name>
    <dbReference type="NCBI Taxonomy" id="3702"/>
    <lineage>
        <taxon>Eukaryota</taxon>
        <taxon>Viridiplantae</taxon>
        <taxon>Streptophyta</taxon>
        <taxon>Embryophyta</taxon>
        <taxon>Tracheophyta</taxon>
        <taxon>Spermatophyta</taxon>
        <taxon>Magnoliopsida</taxon>
        <taxon>eudicotyledons</taxon>
        <taxon>Gunneridae</taxon>
        <taxon>Pentapetalae</taxon>
        <taxon>rosids</taxon>
        <taxon>malvids</taxon>
        <taxon>Brassicales</taxon>
        <taxon>Brassicaceae</taxon>
        <taxon>Camelineae</taxon>
        <taxon>Arabidopsis</taxon>
    </lineage>
</organism>
<sequence>MAFRRVLLSHLRRSHHTCSSLSPHHVSATTQPSIALALFQSRFFSTPSDLDSELTRFRDDSIAGVGSNDHGLEFDDSIASLGSNGHGLEFGDSIGSLGSNGYGLEFGDLSQDLSNYDYLTQPVISLLDSYHDITGLPWWVVIATSTVAFRTALLPILILQRKQTKRISQFLPKLPHFWPPQGSGRSVLDQLKLFRKERKDIGCPSFLWVPAYFSIQISCFFLWITSIRRMSLDHHPGFDSGGALWFQNLTEIPNGLYGPLFPFLIAGLHYTNTQITFTASSVHKVDKFTELAKAYKTFLNLLTCALYFLSFQMPQGSLLYWATNLSFSIAQQSILNHPVVSAKLGLQANDSVQKEAGNPILTNINEGKLTDPSSKGRLISVHNLTPKELVALSAKYLSGGHKDKSIPLLRLALEKDPEYLQAMIILGQALYQKDQFAEAAKCLEQAASKLLDTSPTEVEEVDLLIVASQWAGVSNIRQGKTSEGITHLERVANMKEPDDPKSKAHYLDALVLYSSAIFNEGRREEAAKYLRRVVAYDPSFSELLKQCEEDDTIPTSSSSNSTSKTS</sequence>
<gene>
    <name type="primary">ALB3L3</name>
    <name type="ordered locus">At3g44370/At3g44360</name>
    <name type="ORF">T22K7_50/T22K7_40</name>
</gene>
<reference key="1">
    <citation type="journal article" date="2000" name="Nature">
        <title>Sequence and analysis of chromosome 3 of the plant Arabidopsis thaliana.</title>
        <authorList>
            <person name="Salanoubat M."/>
            <person name="Lemcke K."/>
            <person name="Rieger M."/>
            <person name="Ansorge W."/>
            <person name="Unseld M."/>
            <person name="Fartmann B."/>
            <person name="Valle G."/>
            <person name="Bloecker H."/>
            <person name="Perez-Alonso M."/>
            <person name="Obermaier B."/>
            <person name="Delseny M."/>
            <person name="Boutry M."/>
            <person name="Grivell L.A."/>
            <person name="Mache R."/>
            <person name="Puigdomenech P."/>
            <person name="De Simone V."/>
            <person name="Choisne N."/>
            <person name="Artiguenave F."/>
            <person name="Robert C."/>
            <person name="Brottier P."/>
            <person name="Wincker P."/>
            <person name="Cattolico L."/>
            <person name="Weissenbach J."/>
            <person name="Saurin W."/>
            <person name="Quetier F."/>
            <person name="Schaefer M."/>
            <person name="Mueller-Auer S."/>
            <person name="Gabel C."/>
            <person name="Fuchs M."/>
            <person name="Benes V."/>
            <person name="Wurmbach E."/>
            <person name="Drzonek H."/>
            <person name="Erfle H."/>
            <person name="Jordan N."/>
            <person name="Bangert S."/>
            <person name="Wiedelmann R."/>
            <person name="Kranz H."/>
            <person name="Voss H."/>
            <person name="Holland R."/>
            <person name="Brandt P."/>
            <person name="Nyakatura G."/>
            <person name="Vezzi A."/>
            <person name="D'Angelo M."/>
            <person name="Pallavicini A."/>
            <person name="Toppo S."/>
            <person name="Simionati B."/>
            <person name="Conrad A."/>
            <person name="Hornischer K."/>
            <person name="Kauer G."/>
            <person name="Loehnert T.-H."/>
            <person name="Nordsiek G."/>
            <person name="Reichelt J."/>
            <person name="Scharfe M."/>
            <person name="Schoen O."/>
            <person name="Bargues M."/>
            <person name="Terol J."/>
            <person name="Climent J."/>
            <person name="Navarro P."/>
            <person name="Collado C."/>
            <person name="Perez-Perez A."/>
            <person name="Ottenwaelder B."/>
            <person name="Duchemin D."/>
            <person name="Cooke R."/>
            <person name="Laudie M."/>
            <person name="Berger-Llauro C."/>
            <person name="Purnelle B."/>
            <person name="Masuy D."/>
            <person name="de Haan M."/>
            <person name="Maarse A.C."/>
            <person name="Alcaraz J.-P."/>
            <person name="Cottet A."/>
            <person name="Casacuberta E."/>
            <person name="Monfort A."/>
            <person name="Argiriou A."/>
            <person name="Flores M."/>
            <person name="Liguori R."/>
            <person name="Vitale D."/>
            <person name="Mannhaupt G."/>
            <person name="Haase D."/>
            <person name="Schoof H."/>
            <person name="Rudd S."/>
            <person name="Zaccaria P."/>
            <person name="Mewes H.-W."/>
            <person name="Mayer K.F.X."/>
            <person name="Kaul S."/>
            <person name="Town C.D."/>
            <person name="Koo H.L."/>
            <person name="Tallon L.J."/>
            <person name="Jenkins J."/>
            <person name="Rooney T."/>
            <person name="Rizzo M."/>
            <person name="Walts A."/>
            <person name="Utterback T."/>
            <person name="Fujii C.Y."/>
            <person name="Shea T.P."/>
            <person name="Creasy T.H."/>
            <person name="Haas B."/>
            <person name="Maiti R."/>
            <person name="Wu D."/>
            <person name="Peterson J."/>
            <person name="Van Aken S."/>
            <person name="Pai G."/>
            <person name="Militscher J."/>
            <person name="Sellers P."/>
            <person name="Gill J.E."/>
            <person name="Feldblyum T.V."/>
            <person name="Preuss D."/>
            <person name="Lin X."/>
            <person name="Nierman W.C."/>
            <person name="Salzberg S.L."/>
            <person name="White O."/>
            <person name="Venter J.C."/>
            <person name="Fraser C.M."/>
            <person name="Kaneko T."/>
            <person name="Nakamura Y."/>
            <person name="Sato S."/>
            <person name="Kato T."/>
            <person name="Asamizu E."/>
            <person name="Sasamoto S."/>
            <person name="Kimura T."/>
            <person name="Idesawa K."/>
            <person name="Kawashima K."/>
            <person name="Kishida Y."/>
            <person name="Kiyokawa C."/>
            <person name="Kohara M."/>
            <person name="Matsumoto M."/>
            <person name="Matsuno A."/>
            <person name="Muraki A."/>
            <person name="Nakayama S."/>
            <person name="Nakazaki N."/>
            <person name="Shinpo S."/>
            <person name="Takeuchi C."/>
            <person name="Wada T."/>
            <person name="Watanabe A."/>
            <person name="Yamada M."/>
            <person name="Yasuda M."/>
            <person name="Tabata S."/>
        </authorList>
    </citation>
    <scope>NUCLEOTIDE SEQUENCE [LARGE SCALE GENOMIC DNA]</scope>
    <source>
        <strain>cv. Columbia</strain>
    </source>
</reference>
<reference key="2">
    <citation type="journal article" date="2017" name="Plant J.">
        <title>Araport11: a complete reannotation of the Arabidopsis thaliana reference genome.</title>
        <authorList>
            <person name="Cheng C.Y."/>
            <person name="Krishnakumar V."/>
            <person name="Chan A.P."/>
            <person name="Thibaud-Nissen F."/>
            <person name="Schobel S."/>
            <person name="Town C.D."/>
        </authorList>
    </citation>
    <scope>GENOME REANNOTATION</scope>
    <source>
        <strain>cv. Columbia</strain>
    </source>
</reference>
<reference key="3">
    <citation type="submission" date="2006-07" db="EMBL/GenBank/DDBJ databases">
        <title>Large-scale analysis of RIKEN Arabidopsis full-length (RAFL) cDNAs.</title>
        <authorList>
            <person name="Totoki Y."/>
            <person name="Seki M."/>
            <person name="Ishida J."/>
            <person name="Nakajima M."/>
            <person name="Enju A."/>
            <person name="Kamiya A."/>
            <person name="Narusaka M."/>
            <person name="Shin-i T."/>
            <person name="Nakagawa M."/>
            <person name="Sakamoto N."/>
            <person name="Oishi K."/>
            <person name="Kohara Y."/>
            <person name="Kobayashi M."/>
            <person name="Toyoda A."/>
            <person name="Sakaki Y."/>
            <person name="Sakurai T."/>
            <person name="Iida K."/>
            <person name="Akiyama K."/>
            <person name="Satou M."/>
            <person name="Toyoda T."/>
            <person name="Konagaya A."/>
            <person name="Carninci P."/>
            <person name="Kawai J."/>
            <person name="Hayashizaki Y."/>
            <person name="Shinozaki K."/>
        </authorList>
    </citation>
    <scope>NUCLEOTIDE SEQUENCE [LARGE SCALE MRNA]</scope>
    <source>
        <strain>cv. Columbia</strain>
    </source>
</reference>
<reference key="4">
    <citation type="journal article" date="2003" name="Science">
        <title>Empirical analysis of transcriptional activity in the Arabidopsis genome.</title>
        <authorList>
            <person name="Yamada K."/>
            <person name="Lim J."/>
            <person name="Dale J.M."/>
            <person name="Chen H."/>
            <person name="Shinn P."/>
            <person name="Palm C.J."/>
            <person name="Southwick A.M."/>
            <person name="Wu H.C."/>
            <person name="Kim C.J."/>
            <person name="Nguyen M."/>
            <person name="Pham P.K."/>
            <person name="Cheuk R.F."/>
            <person name="Karlin-Newmann G."/>
            <person name="Liu S.X."/>
            <person name="Lam B."/>
            <person name="Sakano H."/>
            <person name="Wu T."/>
            <person name="Yu G."/>
            <person name="Miranda M."/>
            <person name="Quach H.L."/>
            <person name="Tripp M."/>
            <person name="Chang C.H."/>
            <person name="Lee J.M."/>
            <person name="Toriumi M.J."/>
            <person name="Chan M.M."/>
            <person name="Tang C.C."/>
            <person name="Onodera C.S."/>
            <person name="Deng J.M."/>
            <person name="Akiyama K."/>
            <person name="Ansari Y."/>
            <person name="Arakawa T."/>
            <person name="Banh J."/>
            <person name="Banno F."/>
            <person name="Bowser L."/>
            <person name="Brooks S.Y."/>
            <person name="Carninci P."/>
            <person name="Chao Q."/>
            <person name="Choy N."/>
            <person name="Enju A."/>
            <person name="Goldsmith A.D."/>
            <person name="Gurjal M."/>
            <person name="Hansen N.F."/>
            <person name="Hayashizaki Y."/>
            <person name="Johnson-Hopson C."/>
            <person name="Hsuan V.W."/>
            <person name="Iida K."/>
            <person name="Karnes M."/>
            <person name="Khan S."/>
            <person name="Koesema E."/>
            <person name="Ishida J."/>
            <person name="Jiang P.X."/>
            <person name="Jones T."/>
            <person name="Kawai J."/>
            <person name="Kamiya A."/>
            <person name="Meyers C."/>
            <person name="Nakajima M."/>
            <person name="Narusaka M."/>
            <person name="Seki M."/>
            <person name="Sakurai T."/>
            <person name="Satou M."/>
            <person name="Tamse R."/>
            <person name="Vaysberg M."/>
            <person name="Wallender E.K."/>
            <person name="Wong C."/>
            <person name="Yamamura Y."/>
            <person name="Yuan S."/>
            <person name="Shinozaki K."/>
            <person name="Davis R.W."/>
            <person name="Theologis A."/>
            <person name="Ecker J.R."/>
        </authorList>
    </citation>
    <scope>NUCLEOTIDE SEQUENCE [LARGE SCALE MRNA] OF 423-566</scope>
    <source>
        <strain>cv. Columbia</strain>
    </source>
</reference>
<reference key="5">
    <citation type="journal article" date="2015" name="J. Exp. Bot.">
        <title>Identification of cleavage sites and substrate proteins for two mitochondrial intermediate peptidases in Arabidopsis thaliana.</title>
        <authorList>
            <person name="Carrie C."/>
            <person name="Venne A.S."/>
            <person name="Zahedi R.P."/>
            <person name="Soll J."/>
        </authorList>
    </citation>
    <scope>IDENTIFICATION BY MASS SPECTROMETRY</scope>
    <scope>CLEAVAGE OF TRANSIT PEPTIDE AFTER PHE-44</scope>
</reference>
<feature type="transit peptide" description="Mitochondrion" evidence="4">
    <location>
        <begin position="1"/>
        <end position="44"/>
    </location>
</feature>
<feature type="chain" id="PRO_0000416825" description="ALBINO3-like protein 3, mitochondrial">
    <location>
        <begin position="45"/>
        <end position="566"/>
    </location>
</feature>
<feature type="transmembrane region" description="Helical" evidence="2">
    <location>
        <begin position="139"/>
        <end position="159"/>
    </location>
</feature>
<feature type="transmembrane region" description="Helical" evidence="2">
    <location>
        <begin position="207"/>
        <end position="227"/>
    </location>
</feature>
<feature type="transmembrane region" description="Helical" evidence="2">
    <location>
        <begin position="249"/>
        <end position="269"/>
    </location>
</feature>
<feature type="transmembrane region" description="Helical" evidence="2">
    <location>
        <begin position="301"/>
        <end position="321"/>
    </location>
</feature>
<feature type="repeat" description="TPR 1">
    <location>
        <begin position="386"/>
        <end position="419"/>
    </location>
</feature>
<feature type="repeat" description="TPR 2">
    <location>
        <begin position="420"/>
        <end position="453"/>
    </location>
</feature>
<feature type="repeat" description="TPR 3">
    <location>
        <begin position="465"/>
        <end position="498"/>
    </location>
</feature>
<feature type="repeat" description="TPR 4">
    <location>
        <begin position="507"/>
        <end position="540"/>
    </location>
</feature>
<feature type="region of interest" description="Disordered" evidence="3">
    <location>
        <begin position="547"/>
        <end position="566"/>
    </location>
</feature>
<feature type="compositionally biased region" description="Low complexity" evidence="3">
    <location>
        <begin position="555"/>
        <end position="566"/>
    </location>
</feature>
<name>ALB33_ARATH</name>